<keyword id="KW-0007">Acetylation</keyword>
<keyword id="KW-0903">Direct protein sequencing</keyword>
<keyword id="KW-0349">Heme</keyword>
<keyword id="KW-0408">Iron</keyword>
<keyword id="KW-0479">Metal-binding</keyword>
<keyword id="KW-0514">Muscle protein</keyword>
<keyword id="KW-0561">Oxygen transport</keyword>
<keyword id="KW-0813">Transport</keyword>
<feature type="chain" id="PRO_0000052471" description="Globin">
    <location>
        <begin position="1"/>
        <end position="144"/>
    </location>
</feature>
<feature type="domain" description="Globin" evidence="1">
    <location>
        <begin position="1"/>
        <end position="144"/>
    </location>
</feature>
<feature type="binding site" description="proximal binding residue" evidence="1">
    <location>
        <position position="95"/>
    </location>
    <ligand>
        <name>heme b</name>
        <dbReference type="ChEBI" id="CHEBI:60344"/>
    </ligand>
    <ligandPart>
        <name>Fe</name>
        <dbReference type="ChEBI" id="CHEBI:18248"/>
    </ligandPart>
</feature>
<feature type="modified residue" description="N-acetylalanine" evidence="2">
    <location>
        <position position="1"/>
    </location>
</feature>
<comment type="subunit">
    <text>Monomer.</text>
</comment>
<comment type="miscellaneous">
    <text>This molluscan globin lacks one of the heme-binding histidine residues found in most other globins.</text>
</comment>
<comment type="similarity">
    <text evidence="1">Belongs to the globin family.</text>
</comment>
<proteinExistence type="evidence at protein level"/>
<accession>P14393</accession>
<protein>
    <recommendedName>
        <fullName>Globin</fullName>
    </recommendedName>
    <alternativeName>
        <fullName>Myoglobin</fullName>
    </alternativeName>
</protein>
<evidence type="ECO:0000255" key="1">
    <source>
        <dbReference type="PROSITE-ProRule" id="PRU00238"/>
    </source>
</evidence>
<evidence type="ECO:0000269" key="2">
    <source>
    </source>
</evidence>
<dbReference type="PIR" id="A44585">
    <property type="entry name" value="A44585"/>
</dbReference>
<dbReference type="SMR" id="P14393"/>
<dbReference type="iPTMnet" id="P14393"/>
<dbReference type="GO" id="GO:0005576">
    <property type="term" value="C:extracellular region"/>
    <property type="evidence" value="ECO:0007669"/>
    <property type="project" value="InterPro"/>
</dbReference>
<dbReference type="GO" id="GO:0005833">
    <property type="term" value="C:hemoglobin complex"/>
    <property type="evidence" value="ECO:0007669"/>
    <property type="project" value="InterPro"/>
</dbReference>
<dbReference type="GO" id="GO:0020037">
    <property type="term" value="F:heme binding"/>
    <property type="evidence" value="ECO:0007669"/>
    <property type="project" value="InterPro"/>
</dbReference>
<dbReference type="GO" id="GO:0005506">
    <property type="term" value="F:iron ion binding"/>
    <property type="evidence" value="ECO:0007669"/>
    <property type="project" value="InterPro"/>
</dbReference>
<dbReference type="GO" id="GO:0016491">
    <property type="term" value="F:oxidoreductase activity"/>
    <property type="evidence" value="ECO:0007669"/>
    <property type="project" value="UniProtKB-ARBA"/>
</dbReference>
<dbReference type="GO" id="GO:0019825">
    <property type="term" value="F:oxygen binding"/>
    <property type="evidence" value="ECO:0007669"/>
    <property type="project" value="InterPro"/>
</dbReference>
<dbReference type="GO" id="GO:0005344">
    <property type="term" value="F:oxygen carrier activity"/>
    <property type="evidence" value="ECO:0007669"/>
    <property type="project" value="UniProtKB-KW"/>
</dbReference>
<dbReference type="CDD" id="cd01040">
    <property type="entry name" value="Mb-like"/>
    <property type="match status" value="1"/>
</dbReference>
<dbReference type="Gene3D" id="1.10.490.10">
    <property type="entry name" value="Globins"/>
    <property type="match status" value="1"/>
</dbReference>
<dbReference type="InterPro" id="IPR002336">
    <property type="entry name" value="Erythrocruorin"/>
</dbReference>
<dbReference type="InterPro" id="IPR000971">
    <property type="entry name" value="Globin"/>
</dbReference>
<dbReference type="InterPro" id="IPR009050">
    <property type="entry name" value="Globin-like_sf"/>
</dbReference>
<dbReference type="InterPro" id="IPR012292">
    <property type="entry name" value="Globin/Proto"/>
</dbReference>
<dbReference type="InterPro" id="IPR013314">
    <property type="entry name" value="Globin_lamprey/hagfish"/>
</dbReference>
<dbReference type="InterPro" id="IPR044399">
    <property type="entry name" value="Mb-like_M"/>
</dbReference>
<dbReference type="PANTHER" id="PTHR46783">
    <property type="entry name" value="CYTOGLOBIN"/>
    <property type="match status" value="1"/>
</dbReference>
<dbReference type="PANTHER" id="PTHR46783:SF3">
    <property type="entry name" value="GLOBIN FAMILY PROFILE DOMAIN-CONTAINING PROTEIN"/>
    <property type="match status" value="1"/>
</dbReference>
<dbReference type="Pfam" id="PF00042">
    <property type="entry name" value="Globin"/>
    <property type="match status" value="1"/>
</dbReference>
<dbReference type="PRINTS" id="PR00611">
    <property type="entry name" value="ERYTHCRUORIN"/>
</dbReference>
<dbReference type="SUPFAM" id="SSF46458">
    <property type="entry name" value="Globin-like"/>
    <property type="match status" value="1"/>
</dbReference>
<dbReference type="PROSITE" id="PS01033">
    <property type="entry name" value="GLOBIN"/>
    <property type="match status" value="1"/>
</dbReference>
<name>GLB_APLJU</name>
<reference key="1">
    <citation type="journal article" date="1984" name="J. Mol. Biol.">
        <title>Aplysia myoglobins with an unusual amino acid sequence.</title>
        <authorList>
            <person name="Takagi T."/>
            <person name="Iida S."/>
            <person name="Matsuoka A."/>
            <person name="Shikama K."/>
        </authorList>
    </citation>
    <scope>PROTEIN SEQUENCE</scope>
    <scope>ACETYLATION AT ALA-1</scope>
</reference>
<sequence length="144" mass="15016">ALSAADAGLLAQSWAPVFANSDANGASFLVALFTQFPESANFFNDFKGKSLADIQASPKLRDVSSRIFARLNEFVSNAADAGKMGSMLQQFATEHAGFGVGSAQFQNVRSMFPGFVASLSAPAADAAWNSLFGLIISALQSAGK</sequence>
<organism>
    <name type="scientific">Aplysia juliana</name>
    <name type="common">Walking sea hare</name>
    <name type="synonym">Juliana's sea hare</name>
    <dbReference type="NCBI Taxonomy" id="6506"/>
    <lineage>
        <taxon>Eukaryota</taxon>
        <taxon>Metazoa</taxon>
        <taxon>Spiralia</taxon>
        <taxon>Lophotrochozoa</taxon>
        <taxon>Mollusca</taxon>
        <taxon>Gastropoda</taxon>
        <taxon>Heterobranchia</taxon>
        <taxon>Euthyneura</taxon>
        <taxon>Tectipleura</taxon>
        <taxon>Aplysiida</taxon>
        <taxon>Aplysioidea</taxon>
        <taxon>Aplysiidae</taxon>
        <taxon>Aplysia</taxon>
    </lineage>
</organism>